<name>EFP_BACAC</name>
<sequence>MISVNDFRTGLTIAVDNGLWQVLDFQHVKPGKGAAFVRSKLRNLRTGSVQEKTFRAGEKVEKAHIENRRMQYLYASGEAHVFMDNGTYEQIELGEKQIERELKFLKENMEVSIMTYQGEVLGVELPNTVELQVTETEPGIKGDTASNVTKPATLETGLVVQVPIFINEGEMLIINTGEGKYVSRA</sequence>
<proteinExistence type="inferred from homology"/>
<protein>
    <recommendedName>
        <fullName evidence="1">Elongation factor P</fullName>
        <shortName evidence="1">EF-P</shortName>
    </recommendedName>
</protein>
<accession>C3LKM5</accession>
<dbReference type="EMBL" id="CP001215">
    <property type="protein sequence ID" value="ACP12687.1"/>
    <property type="molecule type" value="Genomic_DNA"/>
</dbReference>
<dbReference type="RefSeq" id="WP_000626507.1">
    <property type="nucleotide sequence ID" value="NC_012581.1"/>
</dbReference>
<dbReference type="SMR" id="C3LKM5"/>
<dbReference type="GeneID" id="45024081"/>
<dbReference type="KEGG" id="bah:BAMEG_4455"/>
<dbReference type="HOGENOM" id="CLU_074944_0_1_9"/>
<dbReference type="UniPathway" id="UPA00345"/>
<dbReference type="GO" id="GO:0005737">
    <property type="term" value="C:cytoplasm"/>
    <property type="evidence" value="ECO:0007669"/>
    <property type="project" value="UniProtKB-SubCell"/>
</dbReference>
<dbReference type="GO" id="GO:0003746">
    <property type="term" value="F:translation elongation factor activity"/>
    <property type="evidence" value="ECO:0007669"/>
    <property type="project" value="UniProtKB-UniRule"/>
</dbReference>
<dbReference type="GO" id="GO:0043043">
    <property type="term" value="P:peptide biosynthetic process"/>
    <property type="evidence" value="ECO:0007669"/>
    <property type="project" value="InterPro"/>
</dbReference>
<dbReference type="CDD" id="cd04470">
    <property type="entry name" value="S1_EF-P_repeat_1"/>
    <property type="match status" value="1"/>
</dbReference>
<dbReference type="CDD" id="cd05794">
    <property type="entry name" value="S1_EF-P_repeat_2"/>
    <property type="match status" value="1"/>
</dbReference>
<dbReference type="FunFam" id="2.30.30.30:FF:000010">
    <property type="entry name" value="Elongation factor P"/>
    <property type="match status" value="1"/>
</dbReference>
<dbReference type="FunFam" id="2.40.50.140:FF:000004">
    <property type="entry name" value="Elongation factor P"/>
    <property type="match status" value="1"/>
</dbReference>
<dbReference type="FunFam" id="2.40.50.140:FF:000009">
    <property type="entry name" value="Elongation factor P"/>
    <property type="match status" value="1"/>
</dbReference>
<dbReference type="Gene3D" id="2.30.30.30">
    <property type="match status" value="1"/>
</dbReference>
<dbReference type="Gene3D" id="2.40.50.140">
    <property type="entry name" value="Nucleic acid-binding proteins"/>
    <property type="match status" value="2"/>
</dbReference>
<dbReference type="HAMAP" id="MF_00141">
    <property type="entry name" value="EF_P"/>
    <property type="match status" value="1"/>
</dbReference>
<dbReference type="InterPro" id="IPR015365">
    <property type="entry name" value="Elong-fact-P_C"/>
</dbReference>
<dbReference type="InterPro" id="IPR012340">
    <property type="entry name" value="NA-bd_OB-fold"/>
</dbReference>
<dbReference type="InterPro" id="IPR014722">
    <property type="entry name" value="Rib_uL2_dom2"/>
</dbReference>
<dbReference type="InterPro" id="IPR020599">
    <property type="entry name" value="Transl_elong_fac_P/YeiP"/>
</dbReference>
<dbReference type="InterPro" id="IPR013185">
    <property type="entry name" value="Transl_elong_KOW-like"/>
</dbReference>
<dbReference type="InterPro" id="IPR001059">
    <property type="entry name" value="Transl_elong_P/YeiP_cen"/>
</dbReference>
<dbReference type="InterPro" id="IPR013852">
    <property type="entry name" value="Transl_elong_P/YeiP_CS"/>
</dbReference>
<dbReference type="InterPro" id="IPR011768">
    <property type="entry name" value="Transl_elongation_fac_P"/>
</dbReference>
<dbReference type="InterPro" id="IPR008991">
    <property type="entry name" value="Translation_prot_SH3-like_sf"/>
</dbReference>
<dbReference type="NCBIfam" id="TIGR00038">
    <property type="entry name" value="efp"/>
    <property type="match status" value="1"/>
</dbReference>
<dbReference type="NCBIfam" id="NF001810">
    <property type="entry name" value="PRK00529.1"/>
    <property type="match status" value="1"/>
</dbReference>
<dbReference type="PANTHER" id="PTHR30053">
    <property type="entry name" value="ELONGATION FACTOR P"/>
    <property type="match status" value="1"/>
</dbReference>
<dbReference type="PANTHER" id="PTHR30053:SF12">
    <property type="entry name" value="ELONGATION FACTOR P (EF-P) FAMILY PROTEIN"/>
    <property type="match status" value="1"/>
</dbReference>
<dbReference type="Pfam" id="PF01132">
    <property type="entry name" value="EFP"/>
    <property type="match status" value="1"/>
</dbReference>
<dbReference type="Pfam" id="PF08207">
    <property type="entry name" value="EFP_N"/>
    <property type="match status" value="1"/>
</dbReference>
<dbReference type="Pfam" id="PF09285">
    <property type="entry name" value="Elong-fact-P_C"/>
    <property type="match status" value="1"/>
</dbReference>
<dbReference type="PIRSF" id="PIRSF005901">
    <property type="entry name" value="EF-P"/>
    <property type="match status" value="1"/>
</dbReference>
<dbReference type="SMART" id="SM01185">
    <property type="entry name" value="EFP"/>
    <property type="match status" value="1"/>
</dbReference>
<dbReference type="SMART" id="SM00841">
    <property type="entry name" value="Elong-fact-P_C"/>
    <property type="match status" value="1"/>
</dbReference>
<dbReference type="SUPFAM" id="SSF50249">
    <property type="entry name" value="Nucleic acid-binding proteins"/>
    <property type="match status" value="2"/>
</dbReference>
<dbReference type="SUPFAM" id="SSF50104">
    <property type="entry name" value="Translation proteins SH3-like domain"/>
    <property type="match status" value="1"/>
</dbReference>
<dbReference type="PROSITE" id="PS01275">
    <property type="entry name" value="EFP"/>
    <property type="match status" value="1"/>
</dbReference>
<gene>
    <name evidence="1" type="primary">efp</name>
    <name type="ordered locus">BAMEG_4455</name>
</gene>
<evidence type="ECO:0000255" key="1">
    <source>
        <dbReference type="HAMAP-Rule" id="MF_00141"/>
    </source>
</evidence>
<keyword id="KW-0963">Cytoplasm</keyword>
<keyword id="KW-0251">Elongation factor</keyword>
<keyword id="KW-0648">Protein biosynthesis</keyword>
<feature type="chain" id="PRO_1000122988" description="Elongation factor P">
    <location>
        <begin position="1"/>
        <end position="185"/>
    </location>
</feature>
<reference key="1">
    <citation type="submission" date="2008-10" db="EMBL/GenBank/DDBJ databases">
        <title>Genome sequence of Bacillus anthracis str. CDC 684.</title>
        <authorList>
            <person name="Dodson R.J."/>
            <person name="Munk A.C."/>
            <person name="Brettin T."/>
            <person name="Bruce D."/>
            <person name="Detter C."/>
            <person name="Tapia R."/>
            <person name="Han C."/>
            <person name="Sutton G."/>
            <person name="Sims D."/>
        </authorList>
    </citation>
    <scope>NUCLEOTIDE SEQUENCE [LARGE SCALE GENOMIC DNA]</scope>
    <source>
        <strain>CDC 684 / NRRL 3495</strain>
    </source>
</reference>
<organism>
    <name type="scientific">Bacillus anthracis (strain CDC 684 / NRRL 3495)</name>
    <dbReference type="NCBI Taxonomy" id="568206"/>
    <lineage>
        <taxon>Bacteria</taxon>
        <taxon>Bacillati</taxon>
        <taxon>Bacillota</taxon>
        <taxon>Bacilli</taxon>
        <taxon>Bacillales</taxon>
        <taxon>Bacillaceae</taxon>
        <taxon>Bacillus</taxon>
        <taxon>Bacillus cereus group</taxon>
    </lineage>
</organism>
<comment type="function">
    <text evidence="1">Involved in peptide bond synthesis. Stimulates efficient translation and peptide-bond synthesis on native or reconstituted 70S ribosomes in vitro. Probably functions indirectly by altering the affinity of the ribosome for aminoacyl-tRNA, thus increasing their reactivity as acceptors for peptidyl transferase.</text>
</comment>
<comment type="pathway">
    <text evidence="1">Protein biosynthesis; polypeptide chain elongation.</text>
</comment>
<comment type="subcellular location">
    <subcellularLocation>
        <location evidence="1">Cytoplasm</location>
    </subcellularLocation>
</comment>
<comment type="similarity">
    <text evidence="1">Belongs to the elongation factor P family.</text>
</comment>